<organism>
    <name type="scientific">Campylobacter jejuni subsp. doylei (strain ATCC BAA-1458 / RM4099 / 269.97)</name>
    <dbReference type="NCBI Taxonomy" id="360109"/>
    <lineage>
        <taxon>Bacteria</taxon>
        <taxon>Pseudomonadati</taxon>
        <taxon>Campylobacterota</taxon>
        <taxon>Epsilonproteobacteria</taxon>
        <taxon>Campylobacterales</taxon>
        <taxon>Campylobacteraceae</taxon>
        <taxon>Campylobacter</taxon>
    </lineage>
</organism>
<dbReference type="EC" id="5.1.1.1" evidence="1"/>
<dbReference type="EMBL" id="CP000768">
    <property type="protein sequence ID" value="ABS43373.1"/>
    <property type="molecule type" value="Genomic_DNA"/>
</dbReference>
<dbReference type="SMR" id="A7H3E3"/>
<dbReference type="KEGG" id="cjd:JJD26997_0907"/>
<dbReference type="HOGENOM" id="CLU_028393_2_2_7"/>
<dbReference type="UniPathway" id="UPA00042">
    <property type="reaction ID" value="UER00497"/>
</dbReference>
<dbReference type="Proteomes" id="UP000002302">
    <property type="component" value="Chromosome"/>
</dbReference>
<dbReference type="GO" id="GO:0005829">
    <property type="term" value="C:cytosol"/>
    <property type="evidence" value="ECO:0007669"/>
    <property type="project" value="TreeGrafter"/>
</dbReference>
<dbReference type="GO" id="GO:0008784">
    <property type="term" value="F:alanine racemase activity"/>
    <property type="evidence" value="ECO:0007669"/>
    <property type="project" value="UniProtKB-UniRule"/>
</dbReference>
<dbReference type="GO" id="GO:0030170">
    <property type="term" value="F:pyridoxal phosphate binding"/>
    <property type="evidence" value="ECO:0007669"/>
    <property type="project" value="UniProtKB-UniRule"/>
</dbReference>
<dbReference type="GO" id="GO:0030632">
    <property type="term" value="P:D-alanine biosynthetic process"/>
    <property type="evidence" value="ECO:0007669"/>
    <property type="project" value="UniProtKB-UniRule"/>
</dbReference>
<dbReference type="GO" id="GO:0009252">
    <property type="term" value="P:peptidoglycan biosynthetic process"/>
    <property type="evidence" value="ECO:0007669"/>
    <property type="project" value="TreeGrafter"/>
</dbReference>
<dbReference type="Gene3D" id="3.20.20.10">
    <property type="entry name" value="Alanine racemase"/>
    <property type="match status" value="1"/>
</dbReference>
<dbReference type="Gene3D" id="2.40.37.10">
    <property type="entry name" value="Lyase, Ornithine Decarboxylase, Chain A, domain 1"/>
    <property type="match status" value="1"/>
</dbReference>
<dbReference type="HAMAP" id="MF_01201">
    <property type="entry name" value="Ala_racemase"/>
    <property type="match status" value="1"/>
</dbReference>
<dbReference type="InterPro" id="IPR000821">
    <property type="entry name" value="Ala_racemase"/>
</dbReference>
<dbReference type="InterPro" id="IPR009006">
    <property type="entry name" value="Ala_racemase/Decarboxylase_C"/>
</dbReference>
<dbReference type="InterPro" id="IPR011079">
    <property type="entry name" value="Ala_racemase_C"/>
</dbReference>
<dbReference type="InterPro" id="IPR001608">
    <property type="entry name" value="Ala_racemase_N"/>
</dbReference>
<dbReference type="InterPro" id="IPR020622">
    <property type="entry name" value="Ala_racemase_pyridoxalP-BS"/>
</dbReference>
<dbReference type="InterPro" id="IPR029066">
    <property type="entry name" value="PLP-binding_barrel"/>
</dbReference>
<dbReference type="NCBIfam" id="TIGR00492">
    <property type="entry name" value="alr"/>
    <property type="match status" value="1"/>
</dbReference>
<dbReference type="NCBIfam" id="NF000791">
    <property type="entry name" value="PRK00053.2-2"/>
    <property type="match status" value="1"/>
</dbReference>
<dbReference type="PANTHER" id="PTHR30511">
    <property type="entry name" value="ALANINE RACEMASE"/>
    <property type="match status" value="1"/>
</dbReference>
<dbReference type="PANTHER" id="PTHR30511:SF0">
    <property type="entry name" value="ALANINE RACEMASE, CATABOLIC-RELATED"/>
    <property type="match status" value="1"/>
</dbReference>
<dbReference type="Pfam" id="PF00842">
    <property type="entry name" value="Ala_racemase_C"/>
    <property type="match status" value="1"/>
</dbReference>
<dbReference type="Pfam" id="PF01168">
    <property type="entry name" value="Ala_racemase_N"/>
    <property type="match status" value="1"/>
</dbReference>
<dbReference type="PRINTS" id="PR00992">
    <property type="entry name" value="ALARACEMASE"/>
</dbReference>
<dbReference type="SMART" id="SM01005">
    <property type="entry name" value="Ala_racemase_C"/>
    <property type="match status" value="1"/>
</dbReference>
<dbReference type="SUPFAM" id="SSF50621">
    <property type="entry name" value="Alanine racemase C-terminal domain-like"/>
    <property type="match status" value="1"/>
</dbReference>
<dbReference type="SUPFAM" id="SSF51419">
    <property type="entry name" value="PLP-binding barrel"/>
    <property type="match status" value="1"/>
</dbReference>
<dbReference type="PROSITE" id="PS00395">
    <property type="entry name" value="ALANINE_RACEMASE"/>
    <property type="match status" value="1"/>
</dbReference>
<protein>
    <recommendedName>
        <fullName evidence="1">Alanine racemase</fullName>
        <ecNumber evidence="1">5.1.1.1</ecNumber>
    </recommendedName>
</protein>
<name>ALR_CAMJD</name>
<sequence length="328" mass="37334">MSLIKIDQKAYEYNLRHIAKKIGSFQRLICVFKDNAYGHGAKLLAPLAKNLGVSFVAVKSEEEAREIEEFFENILILSHRPHGNENSRFIYALNDISQVKNYKQDIKIHLKIDTGMHRNGICVENLEHAIDLIRSSNLKLTGMFTHFASADEMDGSFFVQKENFQKAKKMVKKYFSNLLFHSHNSAALFRGKIPEDEYCRIGLVQFGYGDSNLKRILSLYAHRLSQRILQKGQSIGYGGIFTAVKDMEVATYDLGYADGLFRYNGKGELVLGNGKAMLGKMSMDSFSCENSGEEICVFKDADIWADFFHTINYEILVKLNPNIQRVLV</sequence>
<reference key="1">
    <citation type="submission" date="2007-07" db="EMBL/GenBank/DDBJ databases">
        <title>Complete genome sequence of Campylobacter jejuni subsp doylei 269.97 isolated from human blood.</title>
        <authorList>
            <person name="Fouts D.E."/>
            <person name="Mongodin E.F."/>
            <person name="Puiu D."/>
            <person name="Sebastian Y."/>
            <person name="Miller W.G."/>
            <person name="Mandrell R.E."/>
            <person name="Lastovica A.J."/>
            <person name="Nelson K.E."/>
        </authorList>
    </citation>
    <scope>NUCLEOTIDE SEQUENCE [LARGE SCALE GENOMIC DNA]</scope>
    <source>
        <strain>ATCC BAA-1458 / RM4099 / 269.97</strain>
    </source>
</reference>
<evidence type="ECO:0000255" key="1">
    <source>
        <dbReference type="HAMAP-Rule" id="MF_01201"/>
    </source>
</evidence>
<gene>
    <name type="primary">alr</name>
    <name type="ordered locus">JJD26997_0907</name>
</gene>
<feature type="chain" id="PRO_1000138587" description="Alanine racemase">
    <location>
        <begin position="1"/>
        <end position="328"/>
    </location>
</feature>
<feature type="active site" description="Proton acceptor; specific for D-alanine" evidence="1">
    <location>
        <position position="33"/>
    </location>
</feature>
<feature type="active site" description="Proton acceptor; specific for L-alanine" evidence="1">
    <location>
        <position position="237"/>
    </location>
</feature>
<feature type="binding site" evidence="1">
    <location>
        <position position="118"/>
    </location>
    <ligand>
        <name>substrate</name>
    </ligand>
</feature>
<feature type="binding site" evidence="1">
    <location>
        <position position="283"/>
    </location>
    <ligand>
        <name>substrate</name>
    </ligand>
</feature>
<feature type="modified residue" description="N6-(pyridoxal phosphate)lysine" evidence="1">
    <location>
        <position position="33"/>
    </location>
</feature>
<keyword id="KW-0413">Isomerase</keyword>
<keyword id="KW-0663">Pyridoxal phosphate</keyword>
<accession>A7H3E3</accession>
<comment type="function">
    <text evidence="1">Catalyzes the interconversion of L-alanine and D-alanine. May also act on other amino acids.</text>
</comment>
<comment type="catalytic activity">
    <reaction evidence="1">
        <text>L-alanine = D-alanine</text>
        <dbReference type="Rhea" id="RHEA:20249"/>
        <dbReference type="ChEBI" id="CHEBI:57416"/>
        <dbReference type="ChEBI" id="CHEBI:57972"/>
        <dbReference type="EC" id="5.1.1.1"/>
    </reaction>
</comment>
<comment type="cofactor">
    <cofactor evidence="1">
        <name>pyridoxal 5'-phosphate</name>
        <dbReference type="ChEBI" id="CHEBI:597326"/>
    </cofactor>
</comment>
<comment type="pathway">
    <text evidence="1">Amino-acid biosynthesis; D-alanine biosynthesis; D-alanine from L-alanine: step 1/1.</text>
</comment>
<comment type="similarity">
    <text evidence="1">Belongs to the alanine racemase family.</text>
</comment>
<proteinExistence type="inferred from homology"/>